<evidence type="ECO:0000255" key="1"/>
<evidence type="ECO:0000303" key="2">
    <source>
    </source>
</evidence>
<evidence type="ECO:0000305" key="3"/>
<evidence type="ECO:0000312" key="4">
    <source>
        <dbReference type="EMBL" id="DAA01229.1"/>
    </source>
</evidence>
<evidence type="ECO:0000312" key="5">
    <source>
        <dbReference type="MGI" id="MGI:2681214"/>
    </source>
</evidence>
<feature type="chain" id="PRO_0000248254" description="Taste receptor type 2 member 109">
    <location>
        <begin position="1"/>
        <end position="316"/>
    </location>
</feature>
<feature type="topological domain" description="Extracellular" evidence="1">
    <location>
        <begin position="1"/>
        <end position="14"/>
    </location>
</feature>
<feature type="transmembrane region" description="Helical; Name=1" evidence="1">
    <location>
        <begin position="15"/>
        <end position="35"/>
    </location>
</feature>
<feature type="topological domain" description="Cytoplasmic" evidence="1">
    <location>
        <begin position="36"/>
        <end position="62"/>
    </location>
</feature>
<feature type="transmembrane region" description="Helical; Name=2" evidence="1">
    <location>
        <begin position="63"/>
        <end position="83"/>
    </location>
</feature>
<feature type="topological domain" description="Extracellular" evidence="1">
    <location>
        <begin position="84"/>
        <end position="94"/>
    </location>
</feature>
<feature type="transmembrane region" description="Helical; Name=3" evidence="1">
    <location>
        <begin position="95"/>
        <end position="115"/>
    </location>
</feature>
<feature type="topological domain" description="Cytoplasmic" evidence="1">
    <location>
        <begin position="116"/>
        <end position="135"/>
    </location>
</feature>
<feature type="transmembrane region" description="Helical; Name=4" evidence="1">
    <location>
        <begin position="136"/>
        <end position="156"/>
    </location>
</feature>
<feature type="topological domain" description="Extracellular" evidence="1">
    <location>
        <begin position="157"/>
        <end position="191"/>
    </location>
</feature>
<feature type="transmembrane region" description="Helical; Name=5" evidence="1">
    <location>
        <begin position="192"/>
        <end position="212"/>
    </location>
</feature>
<feature type="topological domain" description="Cytoplasmic" evidence="1">
    <location>
        <begin position="213"/>
        <end position="241"/>
    </location>
</feature>
<feature type="transmembrane region" description="Helical; Name=6" evidence="1">
    <location>
        <begin position="242"/>
        <end position="262"/>
    </location>
</feature>
<feature type="topological domain" description="Extracellular" evidence="1">
    <location>
        <begin position="263"/>
        <end position="270"/>
    </location>
</feature>
<feature type="transmembrane region" description="Helical; Name=7" evidence="1">
    <location>
        <begin position="271"/>
        <end position="291"/>
    </location>
</feature>
<feature type="topological domain" description="Cytoplasmic" evidence="1">
    <location>
        <begin position="292"/>
        <end position="316"/>
    </location>
</feature>
<feature type="glycosylation site" description="N-linked (GlcNAc...) asparagine" evidence="1">
    <location>
        <position position="170"/>
    </location>
</feature>
<dbReference type="EMBL" id="AC151055">
    <property type="status" value="NOT_ANNOTATED_CDS"/>
    <property type="molecule type" value="Genomic_DNA"/>
</dbReference>
<dbReference type="EMBL" id="BK001090">
    <property type="protein sequence ID" value="DAA01229.1"/>
    <property type="molecule type" value="Genomic_DNA"/>
</dbReference>
<dbReference type="CCDS" id="CCDS20631.1"/>
<dbReference type="RefSeq" id="NP_996900.1">
    <property type="nucleotide sequence ID" value="NM_207017.1"/>
</dbReference>
<dbReference type="SMR" id="Q7M707"/>
<dbReference type="FunCoup" id="Q7M707">
    <property type="interactions" value="88"/>
</dbReference>
<dbReference type="STRING" id="10090.ENSMUSP00000069300"/>
<dbReference type="GlyCosmos" id="Q7M707">
    <property type="glycosylation" value="1 site, No reported glycans"/>
</dbReference>
<dbReference type="GlyGen" id="Q7M707">
    <property type="glycosylation" value="1 site"/>
</dbReference>
<dbReference type="PaxDb" id="10090-ENSMUSP00000069300"/>
<dbReference type="DNASU" id="387343"/>
<dbReference type="Ensembl" id="ENSMUST00000067539.4">
    <property type="protein sequence ID" value="ENSMUSP00000069300.4"/>
    <property type="gene ID" value="ENSMUSG00000062528.3"/>
</dbReference>
<dbReference type="GeneID" id="387343"/>
<dbReference type="KEGG" id="mmu:387343"/>
<dbReference type="UCSC" id="uc009ejx.1">
    <property type="organism name" value="mouse"/>
</dbReference>
<dbReference type="AGR" id="MGI:2681214"/>
<dbReference type="CTD" id="387343"/>
<dbReference type="MGI" id="MGI:2681214">
    <property type="gene designation" value="Tas2r109"/>
</dbReference>
<dbReference type="VEuPathDB" id="HostDB:ENSMUSG00000062528"/>
<dbReference type="eggNOG" id="ENOG502SKRK">
    <property type="taxonomic scope" value="Eukaryota"/>
</dbReference>
<dbReference type="GeneTree" id="ENSGT01100000263477"/>
<dbReference type="HOGENOM" id="CLU_072337_3_0_1"/>
<dbReference type="InParanoid" id="Q7M707"/>
<dbReference type="OMA" id="EYHQINI"/>
<dbReference type="OrthoDB" id="8876749at2759"/>
<dbReference type="PhylomeDB" id="Q7M707"/>
<dbReference type="TreeFam" id="TF335891"/>
<dbReference type="BioGRID-ORCS" id="387343">
    <property type="hits" value="0 hits in 76 CRISPR screens"/>
</dbReference>
<dbReference type="PRO" id="PR:Q7M707"/>
<dbReference type="Proteomes" id="UP000000589">
    <property type="component" value="Chromosome 6"/>
</dbReference>
<dbReference type="RNAct" id="Q7M707">
    <property type="molecule type" value="protein"/>
</dbReference>
<dbReference type="Bgee" id="ENSMUSG00000062528">
    <property type="expression patterns" value="Expressed in mesodermal cell in embryo"/>
</dbReference>
<dbReference type="GO" id="GO:0016020">
    <property type="term" value="C:membrane"/>
    <property type="evidence" value="ECO:0007669"/>
    <property type="project" value="UniProtKB-SubCell"/>
</dbReference>
<dbReference type="GO" id="GO:0033038">
    <property type="term" value="F:bitter taste receptor activity"/>
    <property type="evidence" value="ECO:0007669"/>
    <property type="project" value="InterPro"/>
</dbReference>
<dbReference type="GO" id="GO:0004930">
    <property type="term" value="F:G protein-coupled receptor activity"/>
    <property type="evidence" value="ECO:0007669"/>
    <property type="project" value="UniProtKB-KW"/>
</dbReference>
<dbReference type="CDD" id="cd15019">
    <property type="entry name" value="7tm_TAS2R14-like"/>
    <property type="match status" value="1"/>
</dbReference>
<dbReference type="FunFam" id="1.20.1070.10:FF:000042">
    <property type="entry name" value="Taste receptor type 2 member 7"/>
    <property type="match status" value="1"/>
</dbReference>
<dbReference type="Gene3D" id="1.20.1070.10">
    <property type="entry name" value="Rhodopsin 7-helix transmembrane proteins"/>
    <property type="match status" value="1"/>
</dbReference>
<dbReference type="InterPro" id="IPR017452">
    <property type="entry name" value="GPCR_Rhodpsn_7TM"/>
</dbReference>
<dbReference type="InterPro" id="IPR007960">
    <property type="entry name" value="TAS2R"/>
</dbReference>
<dbReference type="PANTHER" id="PTHR11394">
    <property type="entry name" value="TASTE RECEPTOR TYPE 2"/>
    <property type="match status" value="1"/>
</dbReference>
<dbReference type="PANTHER" id="PTHR11394:SF25">
    <property type="entry name" value="TASTE RECEPTOR TYPE 2 MEMBER 109"/>
    <property type="match status" value="1"/>
</dbReference>
<dbReference type="Pfam" id="PF05296">
    <property type="entry name" value="TAS2R"/>
    <property type="match status" value="1"/>
</dbReference>
<dbReference type="SUPFAM" id="SSF81321">
    <property type="entry name" value="Family A G protein-coupled receptor-like"/>
    <property type="match status" value="1"/>
</dbReference>
<dbReference type="PROSITE" id="PS50262">
    <property type="entry name" value="G_PROTEIN_RECEP_F1_2"/>
    <property type="match status" value="1"/>
</dbReference>
<name>TR109_MOUSE</name>
<keyword id="KW-0297">G-protein coupled receptor</keyword>
<keyword id="KW-0325">Glycoprotein</keyword>
<keyword id="KW-0472">Membrane</keyword>
<keyword id="KW-0675">Receptor</keyword>
<keyword id="KW-1185">Reference proteome</keyword>
<keyword id="KW-0716">Sensory transduction</keyword>
<keyword id="KW-0919">Taste</keyword>
<keyword id="KW-0807">Transducer</keyword>
<keyword id="KW-0812">Transmembrane</keyword>
<keyword id="KW-1133">Transmembrane helix</keyword>
<sequence length="316" mass="36750">MEHLLKRTFDITENILLIILFIELIIGLIGNGFTALVHCMDWVKRKKMSLVNKILTALATSRIFLLWFMLVGFPISSLYPYLVTTRLMIQFTSTLWTIANHISVWFATCLSVFYFLKIANFSNSPFLYLKRRVEKVVSVTLLVSLVLLFLNILLLNLEINMCINEYHQINISYIFISYYHLSCQIQVLGSHIIFLSVPVVLSLSTFLLLIFSLWTLHKRMQQHVQGGRDARTTAHFKALQAVIAFLLLYSIFILSLLLQFWIHGLRKKPPFIAFCQVVDTAFPSFHSYVLILRDRKLRHASLSVLSWLKCRPNYVK</sequence>
<accession>Q7M707</accession>
<proteinExistence type="inferred from homology"/>
<protein>
    <recommendedName>
        <fullName>Taste receptor type 2 member 109</fullName>
        <shortName>T2R109</shortName>
        <shortName>mT2R62</shortName>
    </recommendedName>
</protein>
<comment type="function">
    <text evidence="3">Putative taste receptor which may play a role in the perception of bitterness.</text>
</comment>
<comment type="subcellular location">
    <subcellularLocation>
        <location evidence="3">Membrane</location>
        <topology evidence="3">Multi-pass membrane protein</topology>
    </subcellularLocation>
</comment>
<comment type="miscellaneous">
    <text evidence="3">Several bitter taste receptors are expressed in a single taste receptor cell.</text>
</comment>
<comment type="similarity">
    <text evidence="1">Belongs to the G-protein coupled receptor T2R family.</text>
</comment>
<reference key="1">
    <citation type="journal article" date="2009" name="PLoS Biol.">
        <title>Lineage-specific biology revealed by a finished genome assembly of the mouse.</title>
        <authorList>
            <person name="Church D.M."/>
            <person name="Goodstadt L."/>
            <person name="Hillier L.W."/>
            <person name="Zody M.C."/>
            <person name="Goldstein S."/>
            <person name="She X."/>
            <person name="Bult C.J."/>
            <person name="Agarwala R."/>
            <person name="Cherry J.L."/>
            <person name="DiCuccio M."/>
            <person name="Hlavina W."/>
            <person name="Kapustin Y."/>
            <person name="Meric P."/>
            <person name="Maglott D."/>
            <person name="Birtle Z."/>
            <person name="Marques A.C."/>
            <person name="Graves T."/>
            <person name="Zhou S."/>
            <person name="Teague B."/>
            <person name="Potamousis K."/>
            <person name="Churas C."/>
            <person name="Place M."/>
            <person name="Herschleb J."/>
            <person name="Runnheim R."/>
            <person name="Forrest D."/>
            <person name="Amos-Landgraf J."/>
            <person name="Schwartz D.C."/>
            <person name="Cheng Z."/>
            <person name="Lindblad-Toh K."/>
            <person name="Eichler E.E."/>
            <person name="Ponting C.P."/>
        </authorList>
    </citation>
    <scope>NUCLEOTIDE SEQUENCE [LARGE SCALE GENOMIC DNA]</scope>
    <source>
        <strain>C57BL/6J</strain>
    </source>
</reference>
<reference evidence="3 4" key="2">
    <citation type="journal article" date="2003" name="Mol. Biol. Evol.">
        <title>Adaptive diversification of bitter taste receptor genes in mammalian evolution.</title>
        <authorList>
            <person name="Shi P."/>
            <person name="Zhang J."/>
            <person name="Yang H."/>
            <person name="Zhang Y.-P."/>
        </authorList>
    </citation>
    <scope>IDENTIFICATION</scope>
</reference>
<organism>
    <name type="scientific">Mus musculus</name>
    <name type="common">Mouse</name>
    <dbReference type="NCBI Taxonomy" id="10090"/>
    <lineage>
        <taxon>Eukaryota</taxon>
        <taxon>Metazoa</taxon>
        <taxon>Chordata</taxon>
        <taxon>Craniata</taxon>
        <taxon>Vertebrata</taxon>
        <taxon>Euteleostomi</taxon>
        <taxon>Mammalia</taxon>
        <taxon>Eutheria</taxon>
        <taxon>Euarchontoglires</taxon>
        <taxon>Glires</taxon>
        <taxon>Rodentia</taxon>
        <taxon>Myomorpha</taxon>
        <taxon>Muroidea</taxon>
        <taxon>Muridae</taxon>
        <taxon>Murinae</taxon>
        <taxon>Mus</taxon>
        <taxon>Mus</taxon>
    </lineage>
</organism>
<gene>
    <name evidence="5" type="primary">Tas2r109</name>
    <name evidence="2" type="synonym">T2r62</name>
</gene>